<gene>
    <name evidence="1" type="primary">eif6</name>
    <name type="ordered locus">TON_1107</name>
</gene>
<evidence type="ECO:0000255" key="1">
    <source>
        <dbReference type="HAMAP-Rule" id="MF_00032"/>
    </source>
</evidence>
<reference key="1">
    <citation type="journal article" date="2008" name="J. Bacteriol.">
        <title>The complete genome sequence of Thermococcus onnurineus NA1 reveals a mixed heterotrophic and carboxydotrophic metabolism.</title>
        <authorList>
            <person name="Lee H.S."/>
            <person name="Kang S.G."/>
            <person name="Bae S.S."/>
            <person name="Lim J.K."/>
            <person name="Cho Y."/>
            <person name="Kim Y.J."/>
            <person name="Jeon J.H."/>
            <person name="Cha S.-S."/>
            <person name="Kwon K.K."/>
            <person name="Kim H.-T."/>
            <person name="Park C.-J."/>
            <person name="Lee H.-W."/>
            <person name="Kim S.I."/>
            <person name="Chun J."/>
            <person name="Colwell R.R."/>
            <person name="Kim S.-J."/>
            <person name="Lee J.-H."/>
        </authorList>
    </citation>
    <scope>NUCLEOTIDE SEQUENCE [LARGE SCALE GENOMIC DNA]</scope>
    <source>
        <strain>NA1</strain>
    </source>
</reference>
<accession>B6YWY2</accession>
<proteinExistence type="inferred from homology"/>
<comment type="function">
    <text evidence="1">Binds to the 50S ribosomal subunit and prevents its association with the 30S ribosomal subunit to form the 70S initiation complex.</text>
</comment>
<comment type="similarity">
    <text evidence="1">Belongs to the eIF-6 family.</text>
</comment>
<feature type="chain" id="PRO_1000090396" description="Translation initiation factor 6">
    <location>
        <begin position="1"/>
        <end position="228"/>
    </location>
</feature>
<name>IF6_THEON</name>
<organism>
    <name type="scientific">Thermococcus onnurineus (strain NA1)</name>
    <dbReference type="NCBI Taxonomy" id="523850"/>
    <lineage>
        <taxon>Archaea</taxon>
        <taxon>Methanobacteriati</taxon>
        <taxon>Methanobacteriota</taxon>
        <taxon>Thermococci</taxon>
        <taxon>Thermococcales</taxon>
        <taxon>Thermococcaceae</taxon>
        <taxon>Thermococcus</taxon>
    </lineage>
</organism>
<protein>
    <recommendedName>
        <fullName evidence="1">Translation initiation factor 6</fullName>
        <shortName evidence="1">aIF-6</shortName>
    </recommendedName>
</protein>
<keyword id="KW-0396">Initiation factor</keyword>
<keyword id="KW-0648">Protein biosynthesis</keyword>
<sequence>MHIEKLDFENSPYLGVYGTATDRVALIREGLGEKKLEVLREVLKVPLIETSIMKSRIVGVFAAGNSNAIVVPWYIWDAELEHIQNELNELDIDMRIEPFQSTLTAFGNLILANDKAALISVKFTREEAKKLEDILGVEVERGMIGDYHAVGSVGVVTNRGGLVHPEATDEELEWLRDLFKVDIYVGTANMGVPFVGSCMLANSHGVVVGHLTTGPEIVKIEEALGFLD</sequence>
<dbReference type="EMBL" id="CP000855">
    <property type="protein sequence ID" value="ACJ16595.1"/>
    <property type="molecule type" value="Genomic_DNA"/>
</dbReference>
<dbReference type="RefSeq" id="WP_012572067.1">
    <property type="nucleotide sequence ID" value="NC_011529.1"/>
</dbReference>
<dbReference type="SMR" id="B6YWY2"/>
<dbReference type="STRING" id="523850.TON_1107"/>
<dbReference type="GeneID" id="7018129"/>
<dbReference type="KEGG" id="ton:TON_1107"/>
<dbReference type="PATRIC" id="fig|523850.10.peg.1115"/>
<dbReference type="eggNOG" id="arCOG04176">
    <property type="taxonomic scope" value="Archaea"/>
</dbReference>
<dbReference type="HOGENOM" id="CLU_071894_1_0_2"/>
<dbReference type="OrthoDB" id="33582at2157"/>
<dbReference type="Proteomes" id="UP000002727">
    <property type="component" value="Chromosome"/>
</dbReference>
<dbReference type="GO" id="GO:0043022">
    <property type="term" value="F:ribosome binding"/>
    <property type="evidence" value="ECO:0007669"/>
    <property type="project" value="InterPro"/>
</dbReference>
<dbReference type="GO" id="GO:0003743">
    <property type="term" value="F:translation initiation factor activity"/>
    <property type="evidence" value="ECO:0007669"/>
    <property type="project" value="UniProtKB-UniRule"/>
</dbReference>
<dbReference type="GO" id="GO:0042256">
    <property type="term" value="P:cytosolic ribosome assembly"/>
    <property type="evidence" value="ECO:0007669"/>
    <property type="project" value="InterPro"/>
</dbReference>
<dbReference type="CDD" id="cd00527">
    <property type="entry name" value="IF6"/>
    <property type="match status" value="1"/>
</dbReference>
<dbReference type="Gene3D" id="3.75.10.10">
    <property type="entry name" value="L-arginine/glycine Amidinotransferase, Chain A"/>
    <property type="match status" value="1"/>
</dbReference>
<dbReference type="HAMAP" id="MF_00032">
    <property type="entry name" value="eIF_6"/>
    <property type="match status" value="1"/>
</dbReference>
<dbReference type="InterPro" id="IPR002769">
    <property type="entry name" value="eIF6"/>
</dbReference>
<dbReference type="NCBIfam" id="TIGR00323">
    <property type="entry name" value="eIF-6"/>
    <property type="match status" value="1"/>
</dbReference>
<dbReference type="NCBIfam" id="NF003129">
    <property type="entry name" value="PRK04046.1-5"/>
    <property type="match status" value="1"/>
</dbReference>
<dbReference type="PANTHER" id="PTHR10784">
    <property type="entry name" value="TRANSLATION INITIATION FACTOR 6"/>
    <property type="match status" value="1"/>
</dbReference>
<dbReference type="Pfam" id="PF01912">
    <property type="entry name" value="eIF-6"/>
    <property type="match status" value="1"/>
</dbReference>
<dbReference type="PIRSF" id="PIRSF006413">
    <property type="entry name" value="IF-6"/>
    <property type="match status" value="1"/>
</dbReference>
<dbReference type="SMART" id="SM00654">
    <property type="entry name" value="eIF6"/>
    <property type="match status" value="1"/>
</dbReference>
<dbReference type="SUPFAM" id="SSF55909">
    <property type="entry name" value="Pentein"/>
    <property type="match status" value="1"/>
</dbReference>